<keyword id="KW-0067">ATP-binding</keyword>
<keyword id="KW-0342">GTP-binding</keyword>
<keyword id="KW-0547">Nucleotide-binding</keyword>
<keyword id="KW-1185">Reference proteome</keyword>
<gene>
    <name type="ordered locus">PSHAa2554</name>
</gene>
<dbReference type="EMBL" id="CR954246">
    <property type="protein sequence ID" value="CAI87602.1"/>
    <property type="molecule type" value="Genomic_DNA"/>
</dbReference>
<dbReference type="SMR" id="Q3IG30"/>
<dbReference type="STRING" id="326442.PSHAa2554"/>
<dbReference type="KEGG" id="pha:PSHAa2554"/>
<dbReference type="PATRIC" id="fig|326442.8.peg.2464"/>
<dbReference type="eggNOG" id="COG1660">
    <property type="taxonomic scope" value="Bacteria"/>
</dbReference>
<dbReference type="HOGENOM" id="CLU_059558_0_0_6"/>
<dbReference type="BioCyc" id="PHAL326442:PSHA_RS12575-MONOMER"/>
<dbReference type="Proteomes" id="UP000006843">
    <property type="component" value="Chromosome I"/>
</dbReference>
<dbReference type="GO" id="GO:0005524">
    <property type="term" value="F:ATP binding"/>
    <property type="evidence" value="ECO:0007669"/>
    <property type="project" value="UniProtKB-UniRule"/>
</dbReference>
<dbReference type="GO" id="GO:0005525">
    <property type="term" value="F:GTP binding"/>
    <property type="evidence" value="ECO:0007669"/>
    <property type="project" value="UniProtKB-UniRule"/>
</dbReference>
<dbReference type="Gene3D" id="3.40.50.300">
    <property type="entry name" value="P-loop containing nucleotide triphosphate hydrolases"/>
    <property type="match status" value="1"/>
</dbReference>
<dbReference type="HAMAP" id="MF_00636">
    <property type="entry name" value="RapZ_like"/>
    <property type="match status" value="1"/>
</dbReference>
<dbReference type="InterPro" id="IPR027417">
    <property type="entry name" value="P-loop_NTPase"/>
</dbReference>
<dbReference type="InterPro" id="IPR005337">
    <property type="entry name" value="RapZ-like"/>
</dbReference>
<dbReference type="InterPro" id="IPR053930">
    <property type="entry name" value="RapZ-like_N"/>
</dbReference>
<dbReference type="InterPro" id="IPR053931">
    <property type="entry name" value="RapZ_C"/>
</dbReference>
<dbReference type="NCBIfam" id="NF003828">
    <property type="entry name" value="PRK05416.1"/>
    <property type="match status" value="1"/>
</dbReference>
<dbReference type="PANTHER" id="PTHR30448">
    <property type="entry name" value="RNASE ADAPTER PROTEIN RAPZ"/>
    <property type="match status" value="1"/>
</dbReference>
<dbReference type="PANTHER" id="PTHR30448:SF0">
    <property type="entry name" value="RNASE ADAPTER PROTEIN RAPZ"/>
    <property type="match status" value="1"/>
</dbReference>
<dbReference type="Pfam" id="PF22740">
    <property type="entry name" value="PapZ_C"/>
    <property type="match status" value="1"/>
</dbReference>
<dbReference type="Pfam" id="PF03668">
    <property type="entry name" value="RapZ-like_N"/>
    <property type="match status" value="1"/>
</dbReference>
<dbReference type="PIRSF" id="PIRSF005052">
    <property type="entry name" value="P-loopkin"/>
    <property type="match status" value="1"/>
</dbReference>
<dbReference type="SUPFAM" id="SSF52540">
    <property type="entry name" value="P-loop containing nucleoside triphosphate hydrolases"/>
    <property type="match status" value="1"/>
</dbReference>
<feature type="chain" id="PRO_0000258980" description="Nucleotide-binding protein PSHAa2554">
    <location>
        <begin position="1"/>
        <end position="281"/>
    </location>
</feature>
<feature type="binding site" evidence="1">
    <location>
        <begin position="8"/>
        <end position="15"/>
    </location>
    <ligand>
        <name>ATP</name>
        <dbReference type="ChEBI" id="CHEBI:30616"/>
    </ligand>
</feature>
<feature type="binding site" evidence="1">
    <location>
        <begin position="56"/>
        <end position="59"/>
    </location>
    <ligand>
        <name>GTP</name>
        <dbReference type="ChEBI" id="CHEBI:37565"/>
    </ligand>
</feature>
<protein>
    <recommendedName>
        <fullName evidence="1">Nucleotide-binding protein PSHAa2554</fullName>
    </recommendedName>
</protein>
<comment type="function">
    <text evidence="1">Displays ATPase and GTPase activities.</text>
</comment>
<comment type="similarity">
    <text evidence="1">Belongs to the RapZ-like family.</text>
</comment>
<organism>
    <name type="scientific">Pseudoalteromonas translucida (strain TAC 125)</name>
    <dbReference type="NCBI Taxonomy" id="326442"/>
    <lineage>
        <taxon>Bacteria</taxon>
        <taxon>Pseudomonadati</taxon>
        <taxon>Pseudomonadota</taxon>
        <taxon>Gammaproteobacteria</taxon>
        <taxon>Alteromonadales</taxon>
        <taxon>Pseudoalteromonadaceae</taxon>
        <taxon>Pseudoalteromonas</taxon>
    </lineage>
</organism>
<accession>Q3IG30</accession>
<reference key="1">
    <citation type="journal article" date="2005" name="Genome Res.">
        <title>Coping with cold: the genome of the versatile marine Antarctica bacterium Pseudoalteromonas haloplanktis TAC125.</title>
        <authorList>
            <person name="Medigue C."/>
            <person name="Krin E."/>
            <person name="Pascal G."/>
            <person name="Barbe V."/>
            <person name="Bernsel A."/>
            <person name="Bertin P.N."/>
            <person name="Cheung F."/>
            <person name="Cruveiller S."/>
            <person name="D'Amico S."/>
            <person name="Duilio A."/>
            <person name="Fang G."/>
            <person name="Feller G."/>
            <person name="Ho C."/>
            <person name="Mangenot S."/>
            <person name="Marino G."/>
            <person name="Nilsson J."/>
            <person name="Parrilli E."/>
            <person name="Rocha E.P.C."/>
            <person name="Rouy Z."/>
            <person name="Sekowska A."/>
            <person name="Tutino M.L."/>
            <person name="Vallenet D."/>
            <person name="von Heijne G."/>
            <person name="Danchin A."/>
        </authorList>
    </citation>
    <scope>NUCLEOTIDE SEQUENCE [LARGE SCALE GENOMIC DNA]</scope>
    <source>
        <strain>TAC 125</strain>
    </source>
</reference>
<sequence length="281" mass="32157">MELIIISGRSGSGKSVALRVVEDLGYYCVDNIPVNLLPSLVRSVSDNYDKIAVSIDVRNLPKDQQQFNDILEYLPDFAKPTLFYLDSDDQTLIRRYSETRRLHPLSIDSLPLDLAIKKEKELLDVLVTRADHVIDTTDLSVHQLAESMRETILGKKDKQLIITFESFGFKHGIPKGADYVFDARFLPNPHWEPELKPLTGLDQPVKDYLASHSIVQKFTWQIQTFVQTWLPHLERNNRSYLTIAIGCTGGQHRSVYLAQTIGESFAMSHPNVKIRHREQEK</sequence>
<evidence type="ECO:0000255" key="1">
    <source>
        <dbReference type="HAMAP-Rule" id="MF_00636"/>
    </source>
</evidence>
<proteinExistence type="inferred from homology"/>
<name>Y2554_PSET1</name>